<organism>
    <name type="scientific">Nocardioides sp. (strain ATCC BAA-499 / JS614)</name>
    <dbReference type="NCBI Taxonomy" id="196162"/>
    <lineage>
        <taxon>Bacteria</taxon>
        <taxon>Bacillati</taxon>
        <taxon>Actinomycetota</taxon>
        <taxon>Actinomycetes</taxon>
        <taxon>Propionibacteriales</taxon>
        <taxon>Nocardioidaceae</taxon>
        <taxon>Nocardioides</taxon>
    </lineage>
</organism>
<evidence type="ECO:0000255" key="1">
    <source>
        <dbReference type="HAMAP-Rule" id="MF_01588"/>
    </source>
</evidence>
<evidence type="ECO:0000256" key="2">
    <source>
        <dbReference type="SAM" id="MobiDB-lite"/>
    </source>
</evidence>
<accession>A1SMA5</accession>
<feature type="chain" id="PRO_0000313344" description="DNA ligase">
    <location>
        <begin position="1"/>
        <end position="752"/>
    </location>
</feature>
<feature type="domain" description="BRCT" evidence="1">
    <location>
        <begin position="669"/>
        <end position="752"/>
    </location>
</feature>
<feature type="region of interest" description="Disordered" evidence="2">
    <location>
        <begin position="1"/>
        <end position="25"/>
    </location>
</feature>
<feature type="active site" description="N6-AMP-lysine intermediate" evidence="1">
    <location>
        <position position="172"/>
    </location>
</feature>
<feature type="binding site" evidence="1">
    <location>
        <begin position="91"/>
        <end position="95"/>
    </location>
    <ligand>
        <name>NAD(+)</name>
        <dbReference type="ChEBI" id="CHEBI:57540"/>
    </ligand>
</feature>
<feature type="binding site" evidence="1">
    <location>
        <begin position="140"/>
        <end position="141"/>
    </location>
    <ligand>
        <name>NAD(+)</name>
        <dbReference type="ChEBI" id="CHEBI:57540"/>
    </ligand>
</feature>
<feature type="binding site" evidence="1">
    <location>
        <position position="170"/>
    </location>
    <ligand>
        <name>NAD(+)</name>
        <dbReference type="ChEBI" id="CHEBI:57540"/>
    </ligand>
</feature>
<feature type="binding site" evidence="1">
    <location>
        <position position="193"/>
    </location>
    <ligand>
        <name>NAD(+)</name>
        <dbReference type="ChEBI" id="CHEBI:57540"/>
    </ligand>
</feature>
<feature type="binding site" evidence="1">
    <location>
        <position position="233"/>
    </location>
    <ligand>
        <name>NAD(+)</name>
        <dbReference type="ChEBI" id="CHEBI:57540"/>
    </ligand>
</feature>
<feature type="binding site" evidence="1">
    <location>
        <position position="350"/>
    </location>
    <ligand>
        <name>NAD(+)</name>
        <dbReference type="ChEBI" id="CHEBI:57540"/>
    </ligand>
</feature>
<feature type="binding site" evidence="1">
    <location>
        <position position="374"/>
    </location>
    <ligand>
        <name>NAD(+)</name>
        <dbReference type="ChEBI" id="CHEBI:57540"/>
    </ligand>
</feature>
<feature type="binding site" evidence="1">
    <location>
        <position position="474"/>
    </location>
    <ligand>
        <name>Zn(2+)</name>
        <dbReference type="ChEBI" id="CHEBI:29105"/>
    </ligand>
</feature>
<feature type="binding site" evidence="1">
    <location>
        <position position="477"/>
    </location>
    <ligand>
        <name>Zn(2+)</name>
        <dbReference type="ChEBI" id="CHEBI:29105"/>
    </ligand>
</feature>
<feature type="binding site" evidence="1">
    <location>
        <position position="493"/>
    </location>
    <ligand>
        <name>Zn(2+)</name>
        <dbReference type="ChEBI" id="CHEBI:29105"/>
    </ligand>
</feature>
<feature type="binding site" evidence="1">
    <location>
        <position position="499"/>
    </location>
    <ligand>
        <name>Zn(2+)</name>
        <dbReference type="ChEBI" id="CHEBI:29105"/>
    </ligand>
</feature>
<protein>
    <recommendedName>
        <fullName evidence="1">DNA ligase</fullName>
        <ecNumber evidence="1">6.5.1.2</ecNumber>
    </recommendedName>
    <alternativeName>
        <fullName evidence="1">Polydeoxyribonucleotide synthase [NAD(+)]</fullName>
    </alternativeName>
</protein>
<sequence>MKRNGFVPSNSVGRRGIPSNSTSSAIASAGGAVVWTGAGAGRVRARPEQVSVGPGTMSCVTDPREEHRLIAEEIEEARWRYYVLDSPTIDDADFDRRMRRLEALEEEFPELRTPDSPTQTVGGAVSTDFTSHPHLRRMESLDNAFSVEEVEAWYARLRRDGVEDPALLCELKVDGLAINLLYEEGRLVRALTRGDGTTGEDVTSNVKTITSVPHRLTGTDEFPVPALVEVRGEVFLPVEAFERLNESLLEAGKAPFANPRNSAAGSLRQKDPRITASRALGMVCHGIGERRGFEPQAQSHAYDALAAWGLPTSDQVRVVSTLKGVEGYIENAGARRHTIVPYEIDGVVVKVDDVALQRRLGSTSRAPRWAIAFKYPPEEVNAKLLEIRVNVGRTGRVTPYAVMEPTKVAGSTVENATLHNFYEVERKDVRPGGPGDPGDTVILRKAGDVIPEILGPVLALRPEGLQPWVPPTTCPSCGTPLVEQKEGDKDRRCPNHEKCPGQLRERVFFVASRNAFDIEGLGYEAAVALLDAEVIANEGDVFDLDAAALLRAPLFTRAPKKDEDGPQLSANGQRLLDNLDKAKQVPLWRVLVALSIRHVGPKAGRALATEFGSMAAIRAATEEQLAAAEGVGPTIAEAVIEWFKEPWHVEIVDKWERAGVTMADERDESTPRTLAGLTVVVTGSLVDFSRDSAKEAILSRGGKAAGSVSKKTDYVVVGENAGSKADKAEQLGVPVLDEAGFKTLLDGGPAAL</sequence>
<reference key="1">
    <citation type="submission" date="2006-12" db="EMBL/GenBank/DDBJ databases">
        <title>Complete sequence of chromosome 1 of Nocardioides sp. JS614.</title>
        <authorList>
            <person name="Copeland A."/>
            <person name="Lucas S."/>
            <person name="Lapidus A."/>
            <person name="Barry K."/>
            <person name="Detter J.C."/>
            <person name="Glavina del Rio T."/>
            <person name="Hammon N."/>
            <person name="Israni S."/>
            <person name="Dalin E."/>
            <person name="Tice H."/>
            <person name="Pitluck S."/>
            <person name="Thompson L.S."/>
            <person name="Brettin T."/>
            <person name="Bruce D."/>
            <person name="Han C."/>
            <person name="Tapia R."/>
            <person name="Schmutz J."/>
            <person name="Larimer F."/>
            <person name="Land M."/>
            <person name="Hauser L."/>
            <person name="Kyrpides N."/>
            <person name="Kim E."/>
            <person name="Mattes T."/>
            <person name="Gossett J."/>
            <person name="Richardson P."/>
        </authorList>
    </citation>
    <scope>NUCLEOTIDE SEQUENCE [LARGE SCALE GENOMIC DNA]</scope>
    <source>
        <strain>ATCC BAA-499 / JS614</strain>
    </source>
</reference>
<keyword id="KW-0227">DNA damage</keyword>
<keyword id="KW-0234">DNA repair</keyword>
<keyword id="KW-0235">DNA replication</keyword>
<keyword id="KW-0436">Ligase</keyword>
<keyword id="KW-0460">Magnesium</keyword>
<keyword id="KW-0464">Manganese</keyword>
<keyword id="KW-0479">Metal-binding</keyword>
<keyword id="KW-0520">NAD</keyword>
<keyword id="KW-1185">Reference proteome</keyword>
<keyword id="KW-0862">Zinc</keyword>
<proteinExistence type="inferred from homology"/>
<name>DNLJ_NOCSJ</name>
<dbReference type="EC" id="6.5.1.2" evidence="1"/>
<dbReference type="EMBL" id="CP000509">
    <property type="protein sequence ID" value="ABL82940.1"/>
    <property type="molecule type" value="Genomic_DNA"/>
</dbReference>
<dbReference type="SMR" id="A1SMA5"/>
<dbReference type="STRING" id="196162.Noca_3440"/>
<dbReference type="KEGG" id="nca:Noca_3440"/>
<dbReference type="eggNOG" id="COG0272">
    <property type="taxonomic scope" value="Bacteria"/>
</dbReference>
<dbReference type="HOGENOM" id="CLU_007764_2_1_11"/>
<dbReference type="OrthoDB" id="9759736at2"/>
<dbReference type="Proteomes" id="UP000000640">
    <property type="component" value="Chromosome"/>
</dbReference>
<dbReference type="GO" id="GO:0005829">
    <property type="term" value="C:cytosol"/>
    <property type="evidence" value="ECO:0007669"/>
    <property type="project" value="TreeGrafter"/>
</dbReference>
<dbReference type="GO" id="GO:0003911">
    <property type="term" value="F:DNA ligase (NAD+) activity"/>
    <property type="evidence" value="ECO:0007669"/>
    <property type="project" value="UniProtKB-UniRule"/>
</dbReference>
<dbReference type="GO" id="GO:0046872">
    <property type="term" value="F:metal ion binding"/>
    <property type="evidence" value="ECO:0007669"/>
    <property type="project" value="UniProtKB-KW"/>
</dbReference>
<dbReference type="GO" id="GO:0006281">
    <property type="term" value="P:DNA repair"/>
    <property type="evidence" value="ECO:0007669"/>
    <property type="project" value="UniProtKB-KW"/>
</dbReference>
<dbReference type="GO" id="GO:0006260">
    <property type="term" value="P:DNA replication"/>
    <property type="evidence" value="ECO:0007669"/>
    <property type="project" value="UniProtKB-KW"/>
</dbReference>
<dbReference type="CDD" id="cd17748">
    <property type="entry name" value="BRCT_DNA_ligase_like"/>
    <property type="match status" value="1"/>
</dbReference>
<dbReference type="CDD" id="cd00114">
    <property type="entry name" value="LIGANc"/>
    <property type="match status" value="1"/>
</dbReference>
<dbReference type="FunFam" id="1.10.150.20:FF:000006">
    <property type="entry name" value="DNA ligase"/>
    <property type="match status" value="1"/>
</dbReference>
<dbReference type="FunFam" id="3.30.470.30:FF:000001">
    <property type="entry name" value="DNA ligase"/>
    <property type="match status" value="1"/>
</dbReference>
<dbReference type="FunFam" id="3.40.50.10190:FF:000054">
    <property type="entry name" value="DNA ligase"/>
    <property type="match status" value="1"/>
</dbReference>
<dbReference type="Gene3D" id="6.20.10.30">
    <property type="match status" value="1"/>
</dbReference>
<dbReference type="Gene3D" id="1.10.150.20">
    <property type="entry name" value="5' to 3' exonuclease, C-terminal subdomain"/>
    <property type="match status" value="2"/>
</dbReference>
<dbReference type="Gene3D" id="3.40.50.10190">
    <property type="entry name" value="BRCT domain"/>
    <property type="match status" value="1"/>
</dbReference>
<dbReference type="Gene3D" id="3.30.470.30">
    <property type="entry name" value="DNA ligase/mRNA capping enzyme"/>
    <property type="match status" value="1"/>
</dbReference>
<dbReference type="Gene3D" id="1.10.287.610">
    <property type="entry name" value="Helix hairpin bin"/>
    <property type="match status" value="1"/>
</dbReference>
<dbReference type="Gene3D" id="2.40.50.140">
    <property type="entry name" value="Nucleic acid-binding proteins"/>
    <property type="match status" value="1"/>
</dbReference>
<dbReference type="HAMAP" id="MF_01588">
    <property type="entry name" value="DNA_ligase_A"/>
    <property type="match status" value="1"/>
</dbReference>
<dbReference type="InterPro" id="IPR001357">
    <property type="entry name" value="BRCT_dom"/>
</dbReference>
<dbReference type="InterPro" id="IPR036420">
    <property type="entry name" value="BRCT_dom_sf"/>
</dbReference>
<dbReference type="InterPro" id="IPR041663">
    <property type="entry name" value="DisA/LigA_HHH"/>
</dbReference>
<dbReference type="InterPro" id="IPR001679">
    <property type="entry name" value="DNA_ligase"/>
</dbReference>
<dbReference type="InterPro" id="IPR018239">
    <property type="entry name" value="DNA_ligase_AS"/>
</dbReference>
<dbReference type="InterPro" id="IPR013839">
    <property type="entry name" value="DNAligase_adenylation"/>
</dbReference>
<dbReference type="InterPro" id="IPR013840">
    <property type="entry name" value="DNAligase_N"/>
</dbReference>
<dbReference type="InterPro" id="IPR012340">
    <property type="entry name" value="NA-bd_OB-fold"/>
</dbReference>
<dbReference type="InterPro" id="IPR004150">
    <property type="entry name" value="NAD_DNA_ligase_OB"/>
</dbReference>
<dbReference type="InterPro" id="IPR010994">
    <property type="entry name" value="RuvA_2-like"/>
</dbReference>
<dbReference type="InterPro" id="IPR004149">
    <property type="entry name" value="Znf_DNAligase_C4"/>
</dbReference>
<dbReference type="NCBIfam" id="TIGR00575">
    <property type="entry name" value="dnlj"/>
    <property type="match status" value="1"/>
</dbReference>
<dbReference type="NCBIfam" id="NF005932">
    <property type="entry name" value="PRK07956.1"/>
    <property type="match status" value="1"/>
</dbReference>
<dbReference type="PANTHER" id="PTHR23389">
    <property type="entry name" value="CHROMOSOME TRANSMISSION FIDELITY FACTOR 18"/>
    <property type="match status" value="1"/>
</dbReference>
<dbReference type="PANTHER" id="PTHR23389:SF9">
    <property type="entry name" value="DNA LIGASE"/>
    <property type="match status" value="1"/>
</dbReference>
<dbReference type="Pfam" id="PF00533">
    <property type="entry name" value="BRCT"/>
    <property type="match status" value="1"/>
</dbReference>
<dbReference type="Pfam" id="PF01653">
    <property type="entry name" value="DNA_ligase_aden"/>
    <property type="match status" value="1"/>
</dbReference>
<dbReference type="Pfam" id="PF03120">
    <property type="entry name" value="DNA_ligase_OB"/>
    <property type="match status" value="1"/>
</dbReference>
<dbReference type="Pfam" id="PF03119">
    <property type="entry name" value="DNA_ligase_ZBD"/>
    <property type="match status" value="1"/>
</dbReference>
<dbReference type="Pfam" id="PF12826">
    <property type="entry name" value="HHH_2"/>
    <property type="match status" value="1"/>
</dbReference>
<dbReference type="PIRSF" id="PIRSF001604">
    <property type="entry name" value="LigA"/>
    <property type="match status" value="1"/>
</dbReference>
<dbReference type="SMART" id="SM00292">
    <property type="entry name" value="BRCT"/>
    <property type="match status" value="1"/>
</dbReference>
<dbReference type="SMART" id="SM00532">
    <property type="entry name" value="LIGANc"/>
    <property type="match status" value="1"/>
</dbReference>
<dbReference type="SUPFAM" id="SSF52113">
    <property type="entry name" value="BRCT domain"/>
    <property type="match status" value="1"/>
</dbReference>
<dbReference type="SUPFAM" id="SSF56091">
    <property type="entry name" value="DNA ligase/mRNA capping enzyme, catalytic domain"/>
    <property type="match status" value="1"/>
</dbReference>
<dbReference type="SUPFAM" id="SSF50249">
    <property type="entry name" value="Nucleic acid-binding proteins"/>
    <property type="match status" value="1"/>
</dbReference>
<dbReference type="SUPFAM" id="SSF47781">
    <property type="entry name" value="RuvA domain 2-like"/>
    <property type="match status" value="1"/>
</dbReference>
<dbReference type="PROSITE" id="PS50172">
    <property type="entry name" value="BRCT"/>
    <property type="match status" value="1"/>
</dbReference>
<dbReference type="PROSITE" id="PS01055">
    <property type="entry name" value="DNA_LIGASE_N1"/>
    <property type="match status" value="1"/>
</dbReference>
<gene>
    <name evidence="1" type="primary">ligA</name>
    <name type="ordered locus">Noca_3440</name>
</gene>
<comment type="function">
    <text evidence="1">DNA ligase that catalyzes the formation of phosphodiester linkages between 5'-phosphoryl and 3'-hydroxyl groups in double-stranded DNA using NAD as a coenzyme and as the energy source for the reaction. It is essential for DNA replication and repair of damaged DNA.</text>
</comment>
<comment type="catalytic activity">
    <reaction evidence="1">
        <text>NAD(+) + (deoxyribonucleotide)n-3'-hydroxyl + 5'-phospho-(deoxyribonucleotide)m = (deoxyribonucleotide)n+m + AMP + beta-nicotinamide D-nucleotide.</text>
        <dbReference type="EC" id="6.5.1.2"/>
    </reaction>
</comment>
<comment type="cofactor">
    <cofactor evidence="1">
        <name>Mg(2+)</name>
        <dbReference type="ChEBI" id="CHEBI:18420"/>
    </cofactor>
    <cofactor evidence="1">
        <name>Mn(2+)</name>
        <dbReference type="ChEBI" id="CHEBI:29035"/>
    </cofactor>
</comment>
<comment type="similarity">
    <text evidence="1">Belongs to the NAD-dependent DNA ligase family. LigA subfamily.</text>
</comment>